<comment type="function">
    <text evidence="1">Part of the Tol-Pal system, which plays a role in outer membrane invagination during cell division and is important for maintaining outer membrane integrity.</text>
</comment>
<comment type="subunit">
    <text evidence="1">The Tol-Pal system is composed of five core proteins: the inner membrane proteins TolA, TolQ and TolR, the periplasmic protein TolB and the outer membrane protein Pal. They form a network linking the inner and outer membranes and the peptidoglycan layer.</text>
</comment>
<comment type="subcellular location">
    <subcellularLocation>
        <location evidence="1">Periplasm</location>
    </subcellularLocation>
</comment>
<comment type="similarity">
    <text evidence="1">Belongs to the TolB family.</text>
</comment>
<dbReference type="EMBL" id="AE009442">
    <property type="protein sequence ID" value="AAO28759.1"/>
    <property type="molecule type" value="Genomic_DNA"/>
</dbReference>
<dbReference type="RefSeq" id="WP_011097833.1">
    <property type="nucleotide sequence ID" value="NC_004556.1"/>
</dbReference>
<dbReference type="SMR" id="Q87CZ5"/>
<dbReference type="GeneID" id="93904685"/>
<dbReference type="KEGG" id="xft:PD_0894"/>
<dbReference type="HOGENOM" id="CLU_047123_0_0_6"/>
<dbReference type="Proteomes" id="UP000002516">
    <property type="component" value="Chromosome"/>
</dbReference>
<dbReference type="GO" id="GO:0042597">
    <property type="term" value="C:periplasmic space"/>
    <property type="evidence" value="ECO:0007669"/>
    <property type="project" value="UniProtKB-SubCell"/>
</dbReference>
<dbReference type="GO" id="GO:0051301">
    <property type="term" value="P:cell division"/>
    <property type="evidence" value="ECO:0007669"/>
    <property type="project" value="UniProtKB-UniRule"/>
</dbReference>
<dbReference type="GO" id="GO:0017038">
    <property type="term" value="P:protein import"/>
    <property type="evidence" value="ECO:0007669"/>
    <property type="project" value="InterPro"/>
</dbReference>
<dbReference type="Gene3D" id="2.120.10.30">
    <property type="entry name" value="TolB, C-terminal domain"/>
    <property type="match status" value="1"/>
</dbReference>
<dbReference type="Gene3D" id="3.40.50.10070">
    <property type="entry name" value="TolB, N-terminal domain"/>
    <property type="match status" value="1"/>
</dbReference>
<dbReference type="HAMAP" id="MF_00671">
    <property type="entry name" value="TolB"/>
    <property type="match status" value="1"/>
</dbReference>
<dbReference type="InterPro" id="IPR011042">
    <property type="entry name" value="6-blade_b-propeller_TolB-like"/>
</dbReference>
<dbReference type="InterPro" id="IPR011659">
    <property type="entry name" value="PD40"/>
</dbReference>
<dbReference type="InterPro" id="IPR014167">
    <property type="entry name" value="Tol-Pal_TolB"/>
</dbReference>
<dbReference type="InterPro" id="IPR007195">
    <property type="entry name" value="TolB_N"/>
</dbReference>
<dbReference type="NCBIfam" id="TIGR02800">
    <property type="entry name" value="propeller_TolB"/>
    <property type="match status" value="1"/>
</dbReference>
<dbReference type="PANTHER" id="PTHR36842:SF1">
    <property type="entry name" value="PROTEIN TOLB"/>
    <property type="match status" value="1"/>
</dbReference>
<dbReference type="PANTHER" id="PTHR36842">
    <property type="entry name" value="PROTEIN TOLB HOMOLOG"/>
    <property type="match status" value="1"/>
</dbReference>
<dbReference type="Pfam" id="PF07676">
    <property type="entry name" value="PD40"/>
    <property type="match status" value="3"/>
</dbReference>
<dbReference type="Pfam" id="PF04052">
    <property type="entry name" value="TolB_N"/>
    <property type="match status" value="1"/>
</dbReference>
<dbReference type="SUPFAM" id="SSF52964">
    <property type="entry name" value="TolB, N-terminal domain"/>
    <property type="match status" value="1"/>
</dbReference>
<dbReference type="SUPFAM" id="SSF69304">
    <property type="entry name" value="Tricorn protease N-terminal domain"/>
    <property type="match status" value="1"/>
</dbReference>
<protein>
    <recommendedName>
        <fullName evidence="1">Tol-Pal system protein TolB</fullName>
    </recommendedName>
</protein>
<name>TOLB_XYLFT</name>
<sequence length="439" mass="47486">MTKFPRWLAMLVGLLFPLSALTQQQGLTIDIVGGNTAATPIAVLPMPYHDSAGAPATDVSGVVAADLNRSGQFRTLPLGQITERPTHGSEIRFPTWQALKQDYIVVGRVLDARQGTYRVEYELFDVRNGKRMLGLAMTARASAMRDVAHQMADAIYEKITGLRGAFFTRIAYVTASGSHGAMRYALMVADSDGYNPQTIVRSAEPLLSPDWSSDGKKLAYVSFEKGGSSIYIQDIATGSRELVSSFRGINAAPSFAPDGHRIALSLSRSGNPEIYVMDLVSKQLIQLTNSFGIDTEPVWSSDGKFIYFTSDRGGRPQIYKVASVGGAATRVTFQGNYNASASVSYDDKKIVVAQGSGNVYRIAMMDQSSGSTVWNTLSTGSLDESPSFAPNASMVLYAAREGGRGVLYAVSADARVRQRLVSVDSDVREPAWGPYRSVH</sequence>
<keyword id="KW-0131">Cell cycle</keyword>
<keyword id="KW-0132">Cell division</keyword>
<keyword id="KW-0574">Periplasm</keyword>
<keyword id="KW-1185">Reference proteome</keyword>
<keyword id="KW-0732">Signal</keyword>
<proteinExistence type="inferred from homology"/>
<evidence type="ECO:0000255" key="1">
    <source>
        <dbReference type="HAMAP-Rule" id="MF_00671"/>
    </source>
</evidence>
<organism>
    <name type="scientific">Xylella fastidiosa (strain Temecula1 / ATCC 700964)</name>
    <dbReference type="NCBI Taxonomy" id="183190"/>
    <lineage>
        <taxon>Bacteria</taxon>
        <taxon>Pseudomonadati</taxon>
        <taxon>Pseudomonadota</taxon>
        <taxon>Gammaproteobacteria</taxon>
        <taxon>Lysobacterales</taxon>
        <taxon>Lysobacteraceae</taxon>
        <taxon>Xylella</taxon>
    </lineage>
</organism>
<accession>Q87CZ5</accession>
<feature type="signal peptide" evidence="1">
    <location>
        <begin position="1"/>
        <end position="22"/>
    </location>
</feature>
<feature type="chain" id="PRO_0000034701" description="Tol-Pal system protein TolB" evidence="1">
    <location>
        <begin position="23"/>
        <end position="439"/>
    </location>
</feature>
<gene>
    <name evidence="1" type="primary">tolB</name>
    <name type="ordered locus">PD_0894</name>
</gene>
<reference key="1">
    <citation type="journal article" date="2003" name="J. Bacteriol.">
        <title>Comparative analyses of the complete genome sequences of Pierce's disease and citrus variegated chlorosis strains of Xylella fastidiosa.</title>
        <authorList>
            <person name="Van Sluys M.A."/>
            <person name="de Oliveira M.C."/>
            <person name="Monteiro-Vitorello C.B."/>
            <person name="Miyaki C.Y."/>
            <person name="Furlan L.R."/>
            <person name="Camargo L.E.A."/>
            <person name="da Silva A.C.R."/>
            <person name="Moon D.H."/>
            <person name="Takita M.A."/>
            <person name="Lemos E.G.M."/>
            <person name="Machado M.A."/>
            <person name="Ferro M.I.T."/>
            <person name="da Silva F.R."/>
            <person name="Goldman M.H.S."/>
            <person name="Goldman G.H."/>
            <person name="Lemos M.V.F."/>
            <person name="El-Dorry H."/>
            <person name="Tsai S.M."/>
            <person name="Carrer H."/>
            <person name="Carraro D.M."/>
            <person name="de Oliveira R.C."/>
            <person name="Nunes L.R."/>
            <person name="Siqueira W.J."/>
            <person name="Coutinho L.L."/>
            <person name="Kimura E.T."/>
            <person name="Ferro E.S."/>
            <person name="Harakava R."/>
            <person name="Kuramae E.E."/>
            <person name="Marino C.L."/>
            <person name="Giglioti E."/>
            <person name="Abreu I.L."/>
            <person name="Alves L.M.C."/>
            <person name="do Amaral A.M."/>
            <person name="Baia G.S."/>
            <person name="Blanco S.R."/>
            <person name="Brito M.S."/>
            <person name="Cannavan F.S."/>
            <person name="Celestino A.V."/>
            <person name="da Cunha A.F."/>
            <person name="Fenille R.C."/>
            <person name="Ferro J.A."/>
            <person name="Formighieri E.F."/>
            <person name="Kishi L.T."/>
            <person name="Leoni S.G."/>
            <person name="Oliveira A.R."/>
            <person name="Rosa V.E. Jr."/>
            <person name="Sassaki F.T."/>
            <person name="Sena J.A.D."/>
            <person name="de Souza A.A."/>
            <person name="Truffi D."/>
            <person name="Tsukumo F."/>
            <person name="Yanai G.M."/>
            <person name="Zaros L.G."/>
            <person name="Civerolo E.L."/>
            <person name="Simpson A.J.G."/>
            <person name="Almeida N.F. Jr."/>
            <person name="Setubal J.C."/>
            <person name="Kitajima J.P."/>
        </authorList>
    </citation>
    <scope>NUCLEOTIDE SEQUENCE [LARGE SCALE GENOMIC DNA]</scope>
    <source>
        <strain>Temecula1 / ATCC 700964</strain>
    </source>
</reference>